<organism>
    <name type="scientific">Shewanella baltica (strain OS223)</name>
    <dbReference type="NCBI Taxonomy" id="407976"/>
    <lineage>
        <taxon>Bacteria</taxon>
        <taxon>Pseudomonadati</taxon>
        <taxon>Pseudomonadota</taxon>
        <taxon>Gammaproteobacteria</taxon>
        <taxon>Alteromonadales</taxon>
        <taxon>Shewanellaceae</taxon>
        <taxon>Shewanella</taxon>
    </lineage>
</organism>
<protein>
    <recommendedName>
        <fullName evidence="1">tRNA1(Val) (adenine(37)-N6)-methyltransferase</fullName>
        <ecNumber evidence="1">2.1.1.223</ecNumber>
    </recommendedName>
    <alternativeName>
        <fullName evidence="1">tRNA m6A37 methyltransferase</fullName>
    </alternativeName>
</protein>
<name>TRMN6_SHEB2</name>
<comment type="function">
    <text evidence="1">Specifically methylates the adenine in position 37 of tRNA(1)(Val) (anticodon cmo5UAC).</text>
</comment>
<comment type="catalytic activity">
    <reaction evidence="1">
        <text>adenosine(37) in tRNA1(Val) + S-adenosyl-L-methionine = N(6)-methyladenosine(37) in tRNA1(Val) + S-adenosyl-L-homocysteine + H(+)</text>
        <dbReference type="Rhea" id="RHEA:43160"/>
        <dbReference type="Rhea" id="RHEA-COMP:10369"/>
        <dbReference type="Rhea" id="RHEA-COMP:10370"/>
        <dbReference type="ChEBI" id="CHEBI:15378"/>
        <dbReference type="ChEBI" id="CHEBI:57856"/>
        <dbReference type="ChEBI" id="CHEBI:59789"/>
        <dbReference type="ChEBI" id="CHEBI:74411"/>
        <dbReference type="ChEBI" id="CHEBI:74449"/>
        <dbReference type="EC" id="2.1.1.223"/>
    </reaction>
</comment>
<comment type="subcellular location">
    <subcellularLocation>
        <location evidence="1">Cytoplasm</location>
    </subcellularLocation>
</comment>
<comment type="similarity">
    <text evidence="1">Belongs to the methyltransferase superfamily. tRNA (adenine-N(6)-)-methyltransferase family.</text>
</comment>
<evidence type="ECO:0000255" key="1">
    <source>
        <dbReference type="HAMAP-Rule" id="MF_01872"/>
    </source>
</evidence>
<proteinExistence type="inferred from homology"/>
<reference key="1">
    <citation type="submission" date="2008-12" db="EMBL/GenBank/DDBJ databases">
        <title>Complete sequence of chromosome of Shewanella baltica OS223.</title>
        <authorList>
            <consortium name="US DOE Joint Genome Institute"/>
            <person name="Lucas S."/>
            <person name="Copeland A."/>
            <person name="Lapidus A."/>
            <person name="Glavina del Rio T."/>
            <person name="Dalin E."/>
            <person name="Tice H."/>
            <person name="Bruce D."/>
            <person name="Goodwin L."/>
            <person name="Pitluck S."/>
            <person name="Chertkov O."/>
            <person name="Meincke L."/>
            <person name="Brettin T."/>
            <person name="Detter J.C."/>
            <person name="Han C."/>
            <person name="Kuske C.R."/>
            <person name="Larimer F."/>
            <person name="Land M."/>
            <person name="Hauser L."/>
            <person name="Kyrpides N."/>
            <person name="Ovchinnikova G."/>
            <person name="Brettar I."/>
            <person name="Rodrigues J."/>
            <person name="Konstantinidis K."/>
            <person name="Tiedje J."/>
        </authorList>
    </citation>
    <scope>NUCLEOTIDE SEQUENCE [LARGE SCALE GENOMIC DNA]</scope>
    <source>
        <strain>OS223</strain>
    </source>
</reference>
<dbReference type="EC" id="2.1.1.223" evidence="1"/>
<dbReference type="EMBL" id="CP001252">
    <property type="protein sequence ID" value="ACK47935.1"/>
    <property type="molecule type" value="Genomic_DNA"/>
</dbReference>
<dbReference type="RefSeq" id="WP_011845930.1">
    <property type="nucleotide sequence ID" value="NC_011663.1"/>
</dbReference>
<dbReference type="SMR" id="B8E5T2"/>
<dbReference type="KEGG" id="sbp:Sbal223_3451"/>
<dbReference type="HOGENOM" id="CLU_061983_0_0_6"/>
<dbReference type="Proteomes" id="UP000002507">
    <property type="component" value="Chromosome"/>
</dbReference>
<dbReference type="GO" id="GO:0005737">
    <property type="term" value="C:cytoplasm"/>
    <property type="evidence" value="ECO:0007669"/>
    <property type="project" value="UniProtKB-SubCell"/>
</dbReference>
<dbReference type="GO" id="GO:0003676">
    <property type="term" value="F:nucleic acid binding"/>
    <property type="evidence" value="ECO:0007669"/>
    <property type="project" value="InterPro"/>
</dbReference>
<dbReference type="GO" id="GO:0000179">
    <property type="term" value="F:rRNA (adenine-N6,N6-)-dimethyltransferase activity"/>
    <property type="evidence" value="ECO:0007669"/>
    <property type="project" value="InterPro"/>
</dbReference>
<dbReference type="GO" id="GO:0016430">
    <property type="term" value="F:tRNA (adenine-N6)-methyltransferase activity"/>
    <property type="evidence" value="ECO:0007669"/>
    <property type="project" value="UniProtKB-UniRule"/>
</dbReference>
<dbReference type="GO" id="GO:0008033">
    <property type="term" value="P:tRNA processing"/>
    <property type="evidence" value="ECO:0007669"/>
    <property type="project" value="UniProtKB-UniRule"/>
</dbReference>
<dbReference type="CDD" id="cd02440">
    <property type="entry name" value="AdoMet_MTases"/>
    <property type="match status" value="1"/>
</dbReference>
<dbReference type="Gene3D" id="3.40.50.150">
    <property type="entry name" value="Vaccinia Virus protein VP39"/>
    <property type="match status" value="1"/>
</dbReference>
<dbReference type="HAMAP" id="MF_01872">
    <property type="entry name" value="tRNA_methyltr_YfiC"/>
    <property type="match status" value="1"/>
</dbReference>
<dbReference type="InterPro" id="IPR002052">
    <property type="entry name" value="DNA_methylase_N6_adenine_CS"/>
</dbReference>
<dbReference type="InterPro" id="IPR020596">
    <property type="entry name" value="rRNA_Ade_Mease_Trfase_CS"/>
</dbReference>
<dbReference type="InterPro" id="IPR029063">
    <property type="entry name" value="SAM-dependent_MTases_sf"/>
</dbReference>
<dbReference type="InterPro" id="IPR007848">
    <property type="entry name" value="Small_mtfrase_dom"/>
</dbReference>
<dbReference type="InterPro" id="IPR050210">
    <property type="entry name" value="tRNA_Adenine-N(6)_MTase"/>
</dbReference>
<dbReference type="InterPro" id="IPR022882">
    <property type="entry name" value="tRNA_adenine-N6_MeTrfase"/>
</dbReference>
<dbReference type="PANTHER" id="PTHR47739">
    <property type="entry name" value="TRNA1(VAL) (ADENINE(37)-N6)-METHYLTRANSFERASE"/>
    <property type="match status" value="1"/>
</dbReference>
<dbReference type="PANTHER" id="PTHR47739:SF1">
    <property type="entry name" value="TRNA1(VAL) (ADENINE(37)-N6)-METHYLTRANSFERASE"/>
    <property type="match status" value="1"/>
</dbReference>
<dbReference type="Pfam" id="PF05175">
    <property type="entry name" value="MTS"/>
    <property type="match status" value="1"/>
</dbReference>
<dbReference type="SUPFAM" id="SSF53335">
    <property type="entry name" value="S-adenosyl-L-methionine-dependent methyltransferases"/>
    <property type="match status" value="1"/>
</dbReference>
<dbReference type="PROSITE" id="PS00092">
    <property type="entry name" value="N6_MTASE"/>
    <property type="match status" value="1"/>
</dbReference>
<feature type="chain" id="PRO_0000387418" description="tRNA1(Val) (adenine(37)-N6)-methyltransferase">
    <location>
        <begin position="1"/>
        <end position="238"/>
    </location>
</feature>
<gene>
    <name type="ordered locus">Sbal223_3451</name>
</gene>
<keyword id="KW-0963">Cytoplasm</keyword>
<keyword id="KW-0489">Methyltransferase</keyword>
<keyword id="KW-0949">S-adenosyl-L-methionine</keyword>
<keyword id="KW-0808">Transferase</keyword>
<keyword id="KW-0819">tRNA processing</keyword>
<sequence length="238" mass="26315">MAFTFKQFHIDDMNCGMAVGTDSVVLGAWAQLTAAKTVLDIGAGSGLLSLMAAQRCQAHITSVELDTSAAEACQHNFHNSPWANRLTLVNSSIQEFCQQIEYQEYFDHIICNPPYFEQGTQAIQSQRAMARHTDSLSFTALLDAIHVCLAPQGNASLILPMQSMARLNEILAHSPLSLIEMTNLISIVGKSANRVLCVLAHKTHPQIATKISDITIRELSGQYTQTMVQLIRDFYLKY</sequence>
<accession>B8E5T2</accession>